<accession>P0A4W7</accession>
<accession>A0A1R3Y0N6</accession>
<accession>Q10500</accession>
<accession>X2BK70</accession>
<keyword id="KW-0963">Cytoplasm</keyword>
<keyword id="KW-0275">Fatty acid biosynthesis</keyword>
<keyword id="KW-0276">Fatty acid metabolism</keyword>
<keyword id="KW-0444">Lipid biosynthesis</keyword>
<keyword id="KW-0443">Lipid metabolism</keyword>
<keyword id="KW-0596">Phosphopantetheine</keyword>
<keyword id="KW-0597">Phosphoprotein</keyword>
<keyword id="KW-1185">Reference proteome</keyword>
<feature type="chain" id="PRO_0000180246" description="Meromycolate extension acyl carrier protein">
    <location>
        <begin position="1"/>
        <end position="115"/>
    </location>
</feature>
<feature type="domain" description="Carrier" evidence="2">
    <location>
        <begin position="3"/>
        <end position="81"/>
    </location>
</feature>
<feature type="modified residue" description="O-(pantetheine 4'-phosphoryl)serine" evidence="2">
    <location>
        <position position="41"/>
    </location>
</feature>
<dbReference type="EMBL" id="LT708304">
    <property type="protein sequence ID" value="SIU00879.1"/>
    <property type="molecule type" value="Genomic_DNA"/>
</dbReference>
<dbReference type="RefSeq" id="NP_855917.1">
    <property type="nucleotide sequence ID" value="NC_002945.3"/>
</dbReference>
<dbReference type="RefSeq" id="WP_003411565.1">
    <property type="nucleotide sequence ID" value="NC_002945.4"/>
</dbReference>
<dbReference type="SMR" id="P0A4W7"/>
<dbReference type="GeneID" id="45426224"/>
<dbReference type="KEGG" id="mbo:BQ2027_MB2268"/>
<dbReference type="PATRIC" id="fig|233413.5.peg.2489"/>
<dbReference type="Proteomes" id="UP000001419">
    <property type="component" value="Chromosome"/>
</dbReference>
<dbReference type="GO" id="GO:0005829">
    <property type="term" value="C:cytosol"/>
    <property type="evidence" value="ECO:0007669"/>
    <property type="project" value="TreeGrafter"/>
</dbReference>
<dbReference type="GO" id="GO:0016020">
    <property type="term" value="C:membrane"/>
    <property type="evidence" value="ECO:0007669"/>
    <property type="project" value="GOC"/>
</dbReference>
<dbReference type="GO" id="GO:0000035">
    <property type="term" value="F:acyl binding"/>
    <property type="evidence" value="ECO:0007669"/>
    <property type="project" value="TreeGrafter"/>
</dbReference>
<dbReference type="GO" id="GO:0000036">
    <property type="term" value="F:acyl carrier activity"/>
    <property type="evidence" value="ECO:0007669"/>
    <property type="project" value="UniProtKB-UniRule"/>
</dbReference>
<dbReference type="GO" id="GO:0009245">
    <property type="term" value="P:lipid A biosynthetic process"/>
    <property type="evidence" value="ECO:0007669"/>
    <property type="project" value="TreeGrafter"/>
</dbReference>
<dbReference type="FunFam" id="1.10.1200.10:FF:000010">
    <property type="entry name" value="Acyl carrier protein"/>
    <property type="match status" value="1"/>
</dbReference>
<dbReference type="Gene3D" id="1.10.1200.10">
    <property type="entry name" value="ACP-like"/>
    <property type="match status" value="1"/>
</dbReference>
<dbReference type="HAMAP" id="MF_01217">
    <property type="entry name" value="Acyl_carrier"/>
    <property type="match status" value="1"/>
</dbReference>
<dbReference type="InterPro" id="IPR003231">
    <property type="entry name" value="ACP"/>
</dbReference>
<dbReference type="InterPro" id="IPR036736">
    <property type="entry name" value="ACP-like_sf"/>
</dbReference>
<dbReference type="InterPro" id="IPR053393">
    <property type="entry name" value="Meromycolate-ACP"/>
</dbReference>
<dbReference type="InterPro" id="IPR009081">
    <property type="entry name" value="PP-bd_ACP"/>
</dbReference>
<dbReference type="NCBIfam" id="NF040636">
    <property type="entry name" value="AcpM"/>
    <property type="match status" value="1"/>
</dbReference>
<dbReference type="NCBIfam" id="NF002147">
    <property type="entry name" value="PRK00982.1-1"/>
    <property type="match status" value="1"/>
</dbReference>
<dbReference type="NCBIfam" id="NF002148">
    <property type="entry name" value="PRK00982.1-2"/>
    <property type="match status" value="1"/>
</dbReference>
<dbReference type="NCBIfam" id="NF002150">
    <property type="entry name" value="PRK00982.1-4"/>
    <property type="match status" value="1"/>
</dbReference>
<dbReference type="PANTHER" id="PTHR20863">
    <property type="entry name" value="ACYL CARRIER PROTEIN"/>
    <property type="match status" value="1"/>
</dbReference>
<dbReference type="PANTHER" id="PTHR20863:SF76">
    <property type="entry name" value="CARRIER DOMAIN-CONTAINING PROTEIN"/>
    <property type="match status" value="1"/>
</dbReference>
<dbReference type="Pfam" id="PF00550">
    <property type="entry name" value="PP-binding"/>
    <property type="match status" value="1"/>
</dbReference>
<dbReference type="SUPFAM" id="SSF47336">
    <property type="entry name" value="ACP-like"/>
    <property type="match status" value="1"/>
</dbReference>
<dbReference type="PROSITE" id="PS50075">
    <property type="entry name" value="CARRIER"/>
    <property type="match status" value="1"/>
</dbReference>
<organism>
    <name type="scientific">Mycobacterium bovis (strain ATCC BAA-935 / AF2122/97)</name>
    <dbReference type="NCBI Taxonomy" id="233413"/>
    <lineage>
        <taxon>Bacteria</taxon>
        <taxon>Bacillati</taxon>
        <taxon>Actinomycetota</taxon>
        <taxon>Actinomycetes</taxon>
        <taxon>Mycobacteriales</taxon>
        <taxon>Mycobacteriaceae</taxon>
        <taxon>Mycobacterium</taxon>
        <taxon>Mycobacterium tuberculosis complex</taxon>
    </lineage>
</organism>
<proteinExistence type="inferred from homology"/>
<comment type="function">
    <text evidence="1">Acyl carrier protein involved in meromycolate extension.</text>
</comment>
<comment type="subcellular location">
    <subcellularLocation>
        <location evidence="1">Cytoplasm</location>
    </subcellularLocation>
</comment>
<comment type="PTM">
    <text evidence="3">4'-phosphopantetheine is transferred from CoA to a specific serine of apo-AcpM.</text>
</comment>
<comment type="similarity">
    <text evidence="3">Belongs to the acyl carrier protein (ACP) family.</text>
</comment>
<reference key="1">
    <citation type="journal article" date="2003" name="Proc. Natl. Acad. Sci. U.S.A.">
        <title>The complete genome sequence of Mycobacterium bovis.</title>
        <authorList>
            <person name="Garnier T."/>
            <person name="Eiglmeier K."/>
            <person name="Camus J.-C."/>
            <person name="Medina N."/>
            <person name="Mansoor H."/>
            <person name="Pryor M."/>
            <person name="Duthoy S."/>
            <person name="Grondin S."/>
            <person name="Lacroix C."/>
            <person name="Monsempe C."/>
            <person name="Simon S."/>
            <person name="Harris B."/>
            <person name="Atkin R."/>
            <person name="Doggett J."/>
            <person name="Mayes R."/>
            <person name="Keating L."/>
            <person name="Wheeler P.R."/>
            <person name="Parkhill J."/>
            <person name="Barrell B.G."/>
            <person name="Cole S.T."/>
            <person name="Gordon S.V."/>
            <person name="Hewinson R.G."/>
        </authorList>
    </citation>
    <scope>NUCLEOTIDE SEQUENCE [LARGE SCALE GENOMIC DNA]</scope>
    <source>
        <strain>ATCC BAA-935 / AF2122/97</strain>
    </source>
</reference>
<reference key="2">
    <citation type="journal article" date="2017" name="Genome Announc.">
        <title>Updated reference genome sequence and annotation of Mycobacterium bovis AF2122/97.</title>
        <authorList>
            <person name="Malone K.M."/>
            <person name="Farrell D."/>
            <person name="Stuber T.P."/>
            <person name="Schubert O.T."/>
            <person name="Aebersold R."/>
            <person name="Robbe-Austerman S."/>
            <person name="Gordon S.V."/>
        </authorList>
    </citation>
    <scope>NUCLEOTIDE SEQUENCE [LARGE SCALE GENOMIC DNA]</scope>
    <scope>GENOME REANNOTATION</scope>
    <source>
        <strain>ATCC BAA-935 / AF2122/97</strain>
    </source>
</reference>
<evidence type="ECO:0000250" key="1"/>
<evidence type="ECO:0000255" key="2">
    <source>
        <dbReference type="PROSITE-ProRule" id="PRU00258"/>
    </source>
</evidence>
<evidence type="ECO:0000305" key="3"/>
<gene>
    <name type="primary">acpM</name>
    <name type="ordered locus">BQ2027_MB2268</name>
</gene>
<sequence>MPVTQEEIIAGIAEIIEEVTGIEPSEITPEKSFVDDLDIDSLSMVEIAVQTEDKYGVKIPDEDLAGLRTVGDVVAYIQKLEEENPEAAQALRAKIESENPDAVANVQARLEAESK</sequence>
<protein>
    <recommendedName>
        <fullName>Meromycolate extension acyl carrier protein</fullName>
        <shortName>ACP</shortName>
    </recommendedName>
</protein>
<name>ACPM_MYCBO</name>